<comment type="subunit">
    <text evidence="3">Homodimer.</text>
</comment>
<comment type="interaction">
    <interactant intactId="EBI-15195839">
        <id>Q7XHI5</id>
    </interactant>
    <interactant intactId="EBI-4442198">
        <id>Q93Y00</id>
        <label>BHLH7</label>
    </interactant>
    <organismsDiffer>false</organismsDiffer>
    <experiments>3</experiments>
</comment>
<comment type="interaction">
    <interactant intactId="EBI-15195839">
        <id>Q7XHI5</id>
    </interactant>
    <interactant intactId="EBI-21254477">
        <id>F4I171</id>
        <label>MED15A</label>
    </interactant>
    <organismsDiffer>false</organismsDiffer>
    <experiments>3</experiments>
</comment>
<comment type="subcellular location">
    <subcellularLocation>
        <location evidence="1">Nucleus</location>
    </subcellularLocation>
</comment>
<comment type="alternative products">
    <event type="alternative splicing"/>
    <isoform>
        <id>Q7XHI5-1</id>
        <name>1</name>
        <sequence type="displayed"/>
    </isoform>
    <isoform>
        <id>Q7XHI5-2</id>
        <name>2</name>
        <sequence type="described" ref="VSP_036106"/>
    </isoform>
</comment>
<comment type="similarity">
    <text evidence="3">Belongs to the bHLH protein family.</text>
</comment>
<comment type="sequence caution" evidence="3">
    <conflict type="erroneous gene model prediction">
        <sequence resource="EMBL-CDS" id="AAD24388"/>
    </conflict>
</comment>
<dbReference type="EMBL" id="AJ577588">
    <property type="protein sequence ID" value="CAE12175.1"/>
    <property type="molecule type" value="mRNA"/>
</dbReference>
<dbReference type="EMBL" id="AC006081">
    <property type="protein sequence ID" value="AAD24388.1"/>
    <property type="status" value="ALT_SEQ"/>
    <property type="molecule type" value="Genomic_DNA"/>
</dbReference>
<dbReference type="EMBL" id="CP002685">
    <property type="protein sequence ID" value="AEC06964.1"/>
    <property type="molecule type" value="Genomic_DNA"/>
</dbReference>
<dbReference type="EMBL" id="CP002685">
    <property type="protein sequence ID" value="AEC06965.1"/>
    <property type="molecule type" value="Genomic_DNA"/>
</dbReference>
<dbReference type="EMBL" id="CP002685">
    <property type="protein sequence ID" value="ANM62008.1"/>
    <property type="molecule type" value="Genomic_DNA"/>
</dbReference>
<dbReference type="EMBL" id="AK221525">
    <property type="protein sequence ID" value="BAD94824.1"/>
    <property type="molecule type" value="mRNA"/>
</dbReference>
<dbReference type="PIR" id="H84584">
    <property type="entry name" value="H84584"/>
</dbReference>
<dbReference type="RefSeq" id="NP_001077923.1">
    <molecule id="Q7XHI5-2"/>
    <property type="nucleotide sequence ID" value="NM_001084454.2"/>
</dbReference>
<dbReference type="RefSeq" id="NP_001324191.1">
    <molecule id="Q7XHI5-2"/>
    <property type="nucleotide sequence ID" value="NM_001335660.1"/>
</dbReference>
<dbReference type="RefSeq" id="NP_179600.2">
    <molecule id="Q7XHI5-1"/>
    <property type="nucleotide sequence ID" value="NM_127568.5"/>
</dbReference>
<dbReference type="SMR" id="Q7XHI5"/>
<dbReference type="BioGRID" id="1883">
    <property type="interactions" value="4"/>
</dbReference>
<dbReference type="FunCoup" id="Q7XHI5">
    <property type="interactions" value="490"/>
</dbReference>
<dbReference type="IntAct" id="Q7XHI5">
    <property type="interactions" value="5"/>
</dbReference>
<dbReference type="STRING" id="3702.Q7XHI5"/>
<dbReference type="GlyGen" id="Q7XHI5">
    <property type="glycosylation" value="1 site"/>
</dbReference>
<dbReference type="PaxDb" id="3702-AT2G20100.1"/>
<dbReference type="ProteomicsDB" id="240668">
    <molecule id="Q7XHI5-1"/>
</dbReference>
<dbReference type="EnsemblPlants" id="AT2G20100.1">
    <molecule id="Q7XHI5-1"/>
    <property type="protein sequence ID" value="AT2G20100.1"/>
    <property type="gene ID" value="AT2G20100"/>
</dbReference>
<dbReference type="EnsemblPlants" id="AT2G20100.2">
    <molecule id="Q7XHI5-2"/>
    <property type="protein sequence ID" value="AT2G20100.2"/>
    <property type="gene ID" value="AT2G20100"/>
</dbReference>
<dbReference type="EnsemblPlants" id="AT2G20100.4">
    <molecule id="Q7XHI5-2"/>
    <property type="protein sequence ID" value="AT2G20100.4"/>
    <property type="gene ID" value="AT2G20100"/>
</dbReference>
<dbReference type="GeneID" id="816529"/>
<dbReference type="Gramene" id="AT2G20100.1">
    <molecule id="Q7XHI5-1"/>
    <property type="protein sequence ID" value="AT2G20100.1"/>
    <property type="gene ID" value="AT2G20100"/>
</dbReference>
<dbReference type="Gramene" id="AT2G20100.2">
    <molecule id="Q7XHI5-2"/>
    <property type="protein sequence ID" value="AT2G20100.2"/>
    <property type="gene ID" value="AT2G20100"/>
</dbReference>
<dbReference type="Gramene" id="AT2G20100.4">
    <molecule id="Q7XHI5-2"/>
    <property type="protein sequence ID" value="AT2G20100.4"/>
    <property type="gene ID" value="AT2G20100"/>
</dbReference>
<dbReference type="KEGG" id="ath:AT2G20100"/>
<dbReference type="Araport" id="AT2G20100"/>
<dbReference type="TAIR" id="AT2G20100">
    <property type="gene designation" value="UKTF1"/>
</dbReference>
<dbReference type="eggNOG" id="ENOG502QUMC">
    <property type="taxonomic scope" value="Eukaryota"/>
</dbReference>
<dbReference type="HOGENOM" id="CLU_041735_3_0_1"/>
<dbReference type="InParanoid" id="Q7XHI5"/>
<dbReference type="OMA" id="ENWEEQM"/>
<dbReference type="OrthoDB" id="1839773at2759"/>
<dbReference type="PhylomeDB" id="Q7XHI5"/>
<dbReference type="PRO" id="PR:Q7XHI5"/>
<dbReference type="Proteomes" id="UP000006548">
    <property type="component" value="Chromosome 2"/>
</dbReference>
<dbReference type="ExpressionAtlas" id="Q7XHI5">
    <property type="expression patterns" value="baseline and differential"/>
</dbReference>
<dbReference type="GO" id="GO:0005634">
    <property type="term" value="C:nucleus"/>
    <property type="evidence" value="ECO:0007669"/>
    <property type="project" value="UniProtKB-SubCell"/>
</dbReference>
<dbReference type="GO" id="GO:0003677">
    <property type="term" value="F:DNA binding"/>
    <property type="evidence" value="ECO:0007669"/>
    <property type="project" value="UniProtKB-KW"/>
</dbReference>
<dbReference type="GO" id="GO:0003700">
    <property type="term" value="F:DNA-binding transcription factor activity"/>
    <property type="evidence" value="ECO:0007669"/>
    <property type="project" value="InterPro"/>
</dbReference>
<dbReference type="GO" id="GO:0046983">
    <property type="term" value="F:protein dimerization activity"/>
    <property type="evidence" value="ECO:0007669"/>
    <property type="project" value="InterPro"/>
</dbReference>
<dbReference type="CDD" id="cd11393">
    <property type="entry name" value="bHLH_AtbHLH_like"/>
    <property type="match status" value="1"/>
</dbReference>
<dbReference type="Gene3D" id="4.10.280.10">
    <property type="entry name" value="Helix-loop-helix DNA-binding domain"/>
    <property type="match status" value="1"/>
</dbReference>
<dbReference type="InterPro" id="IPR045239">
    <property type="entry name" value="bHLH95_bHLH"/>
</dbReference>
<dbReference type="InterPro" id="IPR011598">
    <property type="entry name" value="bHLH_dom"/>
</dbReference>
<dbReference type="InterPro" id="IPR036638">
    <property type="entry name" value="HLH_DNA-bd_sf"/>
</dbReference>
<dbReference type="InterPro" id="IPR045843">
    <property type="entry name" value="IND-like"/>
</dbReference>
<dbReference type="PANTHER" id="PTHR16223:SF136">
    <property type="entry name" value="TRANSCRIPTION FACTOR BHLH133-RELATED"/>
    <property type="match status" value="1"/>
</dbReference>
<dbReference type="PANTHER" id="PTHR16223">
    <property type="entry name" value="TRANSCRIPTION FACTOR BHLH83-RELATED"/>
    <property type="match status" value="1"/>
</dbReference>
<dbReference type="SUPFAM" id="SSF47459">
    <property type="entry name" value="HLH, helix-loop-helix DNA-binding domain"/>
    <property type="match status" value="1"/>
</dbReference>
<dbReference type="PROSITE" id="PS50888">
    <property type="entry name" value="BHLH"/>
    <property type="match status" value="1"/>
</dbReference>
<reference key="1">
    <citation type="journal article" date="2003" name="Mol. Biol. Evol.">
        <title>The basic helix-loop-helix transcription factor family in plants: a genome-wide study of protein structure and functional diversity.</title>
        <authorList>
            <person name="Heim M.A."/>
            <person name="Jakoby M."/>
            <person name="Werber M."/>
            <person name="Martin C."/>
            <person name="Weisshaar B."/>
            <person name="Bailey P.C."/>
        </authorList>
    </citation>
    <scope>NUCLEOTIDE SEQUENCE [MRNA] (ISOFORM 1)</scope>
    <scope>GENE FAMILY</scope>
    <scope>NOMENCLATURE</scope>
    <source>
        <strain>cv. Columbia</strain>
    </source>
</reference>
<reference key="2">
    <citation type="journal article" date="1999" name="Nature">
        <title>Sequence and analysis of chromosome 2 of the plant Arabidopsis thaliana.</title>
        <authorList>
            <person name="Lin X."/>
            <person name="Kaul S."/>
            <person name="Rounsley S.D."/>
            <person name="Shea T.P."/>
            <person name="Benito M.-I."/>
            <person name="Town C.D."/>
            <person name="Fujii C.Y."/>
            <person name="Mason T.M."/>
            <person name="Bowman C.L."/>
            <person name="Barnstead M.E."/>
            <person name="Feldblyum T.V."/>
            <person name="Buell C.R."/>
            <person name="Ketchum K.A."/>
            <person name="Lee J.J."/>
            <person name="Ronning C.M."/>
            <person name="Koo H.L."/>
            <person name="Moffat K.S."/>
            <person name="Cronin L.A."/>
            <person name="Shen M."/>
            <person name="Pai G."/>
            <person name="Van Aken S."/>
            <person name="Umayam L."/>
            <person name="Tallon L.J."/>
            <person name="Gill J.E."/>
            <person name="Adams M.D."/>
            <person name="Carrera A.J."/>
            <person name="Creasy T.H."/>
            <person name="Goodman H.M."/>
            <person name="Somerville C.R."/>
            <person name="Copenhaver G.P."/>
            <person name="Preuss D."/>
            <person name="Nierman W.C."/>
            <person name="White O."/>
            <person name="Eisen J.A."/>
            <person name="Salzberg S.L."/>
            <person name="Fraser C.M."/>
            <person name="Venter J.C."/>
        </authorList>
    </citation>
    <scope>NUCLEOTIDE SEQUENCE [LARGE SCALE GENOMIC DNA]</scope>
    <source>
        <strain>cv. Columbia</strain>
    </source>
</reference>
<reference key="3">
    <citation type="journal article" date="2017" name="Plant J.">
        <title>Araport11: a complete reannotation of the Arabidopsis thaliana reference genome.</title>
        <authorList>
            <person name="Cheng C.Y."/>
            <person name="Krishnakumar V."/>
            <person name="Chan A.P."/>
            <person name="Thibaud-Nissen F."/>
            <person name="Schobel S."/>
            <person name="Town C.D."/>
        </authorList>
    </citation>
    <scope>GENOME REANNOTATION</scope>
    <source>
        <strain>cv. Columbia</strain>
    </source>
</reference>
<reference key="4">
    <citation type="submission" date="2005-03" db="EMBL/GenBank/DDBJ databases">
        <title>Large-scale analysis of RIKEN Arabidopsis full-length (RAFL) cDNAs.</title>
        <authorList>
            <person name="Totoki Y."/>
            <person name="Seki M."/>
            <person name="Ishida J."/>
            <person name="Nakajima M."/>
            <person name="Enju A."/>
            <person name="Kamiya A."/>
            <person name="Narusaka M."/>
            <person name="Shin-i T."/>
            <person name="Nakagawa M."/>
            <person name="Sakamoto N."/>
            <person name="Oishi K."/>
            <person name="Kohara Y."/>
            <person name="Kobayashi M."/>
            <person name="Toyoda A."/>
            <person name="Sakaki Y."/>
            <person name="Sakurai T."/>
            <person name="Iida K."/>
            <person name="Akiyama K."/>
            <person name="Satou M."/>
            <person name="Toyoda T."/>
            <person name="Konagaya A."/>
            <person name="Carninci P."/>
            <person name="Kawai J."/>
            <person name="Hayashizaki Y."/>
            <person name="Shinozaki K."/>
        </authorList>
    </citation>
    <scope>NUCLEOTIDE SEQUENCE [LARGE SCALE MRNA] (ISOFORM 2)</scope>
    <source>
        <strain>cv. Columbia</strain>
    </source>
</reference>
<organism>
    <name type="scientific">Arabidopsis thaliana</name>
    <name type="common">Mouse-ear cress</name>
    <dbReference type="NCBI Taxonomy" id="3702"/>
    <lineage>
        <taxon>Eukaryota</taxon>
        <taxon>Viridiplantae</taxon>
        <taxon>Streptophyta</taxon>
        <taxon>Embryophyta</taxon>
        <taxon>Tracheophyta</taxon>
        <taxon>Spermatophyta</taxon>
        <taxon>Magnoliopsida</taxon>
        <taxon>eudicotyledons</taxon>
        <taxon>Gunneridae</taxon>
        <taxon>Pentapetalae</taxon>
        <taxon>rosids</taxon>
        <taxon>malvids</taxon>
        <taxon>Brassicales</taxon>
        <taxon>Brassicaceae</taxon>
        <taxon>Camelineae</taxon>
        <taxon>Arabidopsis</taxon>
    </lineage>
</organism>
<proteinExistence type="evidence at protein level"/>
<name>BH133_ARATH</name>
<sequence>MNRGVLESSPVQHLTAAGNPNWWNNVSRGLRPPTPLMSHEPPSTTAFIPSLLPNFFSSPTSSSSSSPSFPPPNSNPNFSSWLEMSDLPLDQPWSLSQLLLGGLMMGEEEKMEMMNHHHHQNQHQSYQAKRIQNWEEQVLRHQASMKQESSNNNSYGIMSSPNSPPNKSCATIINTNEDNNNNIHSGLNLSECNSSEMIGSSFANKKPKLQVPSSQSTLKVRKEKLGGRIASLHQLVSPFGKTDTASVLSEAIGYIRFLHSQIEALSLPYFGTPSRNNMMHQHAQRNMNGIFPEDPGQLVNEYCMKRGVSLSSTDNQKSNPNEEPMKDLRSRGLCLVPISCTLQVGSDNGADYWAPAFGTTLQ</sequence>
<feature type="chain" id="PRO_0000358816" description="Transcription factor bHLH133">
    <location>
        <begin position="1"/>
        <end position="362"/>
    </location>
</feature>
<feature type="domain" description="bHLH" evidence="1">
    <location>
        <begin position="209"/>
        <end position="258"/>
    </location>
</feature>
<feature type="splice variant" id="VSP_036106" description="In isoform 2." evidence="2">
    <original>LVNEYCMKRGVSLSSTDNQKSNPNEEPMKDLRSRGLCLVPISCTLQVGSDNGADYWAPAFGTTLQ</original>
    <variation>VRTYIFLLSSFIYFTFYWIN</variation>
    <location>
        <begin position="298"/>
        <end position="362"/>
    </location>
</feature>
<keyword id="KW-0025">Alternative splicing</keyword>
<keyword id="KW-0238">DNA-binding</keyword>
<keyword id="KW-0539">Nucleus</keyword>
<keyword id="KW-1185">Reference proteome</keyword>
<keyword id="KW-0804">Transcription</keyword>
<keyword id="KW-0805">Transcription regulation</keyword>
<gene>
    <name type="primary">BHLH133</name>
    <name type="ordered locus">At2g20100</name>
    <name type="ORF">T2G17.10</name>
</gene>
<evidence type="ECO:0000255" key="1">
    <source>
        <dbReference type="PROSITE-ProRule" id="PRU00981"/>
    </source>
</evidence>
<evidence type="ECO:0000303" key="2">
    <source ref="4"/>
</evidence>
<evidence type="ECO:0000305" key="3"/>
<protein>
    <recommendedName>
        <fullName>Transcription factor bHLH133</fullName>
    </recommendedName>
    <alternativeName>
        <fullName>Basic helix-loop-helix protein 133</fullName>
        <shortName>AtbHLH133</shortName>
        <shortName>bHLH 133</shortName>
    </alternativeName>
    <alternativeName>
        <fullName>bHLH transcription factor bHLH133</fullName>
    </alternativeName>
</protein>
<accession>Q7XHI5</accession>
<accession>Q56XZ8</accession>
<accession>Q9SL72</accession>